<proteinExistence type="inferred from homology"/>
<feature type="chain" id="PRO_0000180744" description="Glucose-6-phosphate isomerase">
    <location>
        <begin position="1"/>
        <end position="449"/>
    </location>
</feature>
<feature type="active site" description="Proton donor" evidence="1">
    <location>
        <position position="291"/>
    </location>
</feature>
<feature type="active site" evidence="1">
    <location>
        <position position="312"/>
    </location>
</feature>
<feature type="active site" evidence="1">
    <location>
        <position position="426"/>
    </location>
</feature>
<protein>
    <recommendedName>
        <fullName evidence="1">Glucose-6-phosphate isomerase</fullName>
        <shortName evidence="1">GPI</shortName>
        <ecNumber evidence="1">5.3.1.9</ecNumber>
    </recommendedName>
    <alternativeName>
        <fullName evidence="1">Phosphoglucose isomerase</fullName>
        <shortName evidence="1">PGI</shortName>
    </alternativeName>
    <alternativeName>
        <fullName evidence="1">Phosphohexose isomerase</fullName>
        <shortName evidence="1">PHI</shortName>
    </alternativeName>
</protein>
<name>G6PI_STRP6</name>
<accession>Q5XE09</accession>
<keyword id="KW-0963">Cytoplasm</keyword>
<keyword id="KW-0312">Gluconeogenesis</keyword>
<keyword id="KW-0324">Glycolysis</keyword>
<keyword id="KW-0413">Isomerase</keyword>
<sequence length="449" mass="49433">MSHITFDYSKVLESFAGQHEIDFLQGQVTEADKLLREGTGPGSDFLGWLDLPENYDKEEFARILTAAEKIKADSEVLVVIGIGGSYLGAKAAIDFLNHHFANLQTAKERKAPQILYAGNSISSTYLADLVEYVQDKEFSVNVISKSGTTTEPAIAFRVFKELLVKKYGQEEANKRIYATTDKVKGAVKVEADANNWETFVVPDNVGGRFSVLTAVGLLPIAASGADITALMEGANAARKDLSSDKISENIAYQYAAVRNVLYRKGYITEILANYEPSLQYLGEWWKQLAGESEGKDQKGIYPTSANFSTDLHSLGQFIQEGYRNLFETVIRVDNPRKNVIIPELAEDLDGLGYLQGKDVDFVNKKATDGVLLAHTDGGVPNMFVTLPAQDEFTLGYTIYFFELAIAVSGYMNAVNPFDQPGVEAYKRNMFALLGKPGFEALSAELNARL</sequence>
<organism>
    <name type="scientific">Streptococcus pyogenes serotype M6 (strain ATCC BAA-946 / MGAS10394)</name>
    <dbReference type="NCBI Taxonomy" id="286636"/>
    <lineage>
        <taxon>Bacteria</taxon>
        <taxon>Bacillati</taxon>
        <taxon>Bacillota</taxon>
        <taxon>Bacilli</taxon>
        <taxon>Lactobacillales</taxon>
        <taxon>Streptococcaceae</taxon>
        <taxon>Streptococcus</taxon>
    </lineage>
</organism>
<evidence type="ECO:0000255" key="1">
    <source>
        <dbReference type="HAMAP-Rule" id="MF_00473"/>
    </source>
</evidence>
<comment type="function">
    <text evidence="1">Catalyzes the reversible isomerization of glucose-6-phosphate to fructose-6-phosphate.</text>
</comment>
<comment type="catalytic activity">
    <reaction evidence="1">
        <text>alpha-D-glucose 6-phosphate = beta-D-fructose 6-phosphate</text>
        <dbReference type="Rhea" id="RHEA:11816"/>
        <dbReference type="ChEBI" id="CHEBI:57634"/>
        <dbReference type="ChEBI" id="CHEBI:58225"/>
        <dbReference type="EC" id="5.3.1.9"/>
    </reaction>
</comment>
<comment type="pathway">
    <text evidence="1">Carbohydrate biosynthesis; gluconeogenesis.</text>
</comment>
<comment type="pathway">
    <text evidence="1">Carbohydrate degradation; glycolysis; D-glyceraldehyde 3-phosphate and glycerone phosphate from D-glucose: step 2/4.</text>
</comment>
<comment type="subcellular location">
    <subcellularLocation>
        <location evidence="1">Cytoplasm</location>
    </subcellularLocation>
</comment>
<comment type="similarity">
    <text evidence="1">Belongs to the GPI family.</text>
</comment>
<reference key="1">
    <citation type="journal article" date="2004" name="J. Infect. Dis.">
        <title>Progress toward characterization of the group A Streptococcus metagenome: complete genome sequence of a macrolide-resistant serotype M6 strain.</title>
        <authorList>
            <person name="Banks D.J."/>
            <person name="Porcella S.F."/>
            <person name="Barbian K.D."/>
            <person name="Beres S.B."/>
            <person name="Philips L.E."/>
            <person name="Voyich J.M."/>
            <person name="DeLeo F.R."/>
            <person name="Martin J.M."/>
            <person name="Somerville G.A."/>
            <person name="Musser J.M."/>
        </authorList>
    </citation>
    <scope>NUCLEOTIDE SEQUENCE [LARGE SCALE GENOMIC DNA]</scope>
    <source>
        <strain>ATCC BAA-946 / MGAS10394</strain>
    </source>
</reference>
<gene>
    <name evidence="1" type="primary">pgi</name>
    <name type="ordered locus">M6_Spy0219</name>
</gene>
<dbReference type="EC" id="5.3.1.9" evidence="1"/>
<dbReference type="EMBL" id="CP000003">
    <property type="protein sequence ID" value="AAT86354.1"/>
    <property type="molecule type" value="Genomic_DNA"/>
</dbReference>
<dbReference type="RefSeq" id="WP_011184137.1">
    <property type="nucleotide sequence ID" value="NC_006086.1"/>
</dbReference>
<dbReference type="SMR" id="Q5XE09"/>
<dbReference type="KEGG" id="spa:M6_Spy0219"/>
<dbReference type="HOGENOM" id="CLU_037303_0_1_9"/>
<dbReference type="UniPathway" id="UPA00109">
    <property type="reaction ID" value="UER00181"/>
</dbReference>
<dbReference type="UniPathway" id="UPA00138"/>
<dbReference type="Proteomes" id="UP000001167">
    <property type="component" value="Chromosome"/>
</dbReference>
<dbReference type="GO" id="GO:0005829">
    <property type="term" value="C:cytosol"/>
    <property type="evidence" value="ECO:0007669"/>
    <property type="project" value="TreeGrafter"/>
</dbReference>
<dbReference type="GO" id="GO:0097367">
    <property type="term" value="F:carbohydrate derivative binding"/>
    <property type="evidence" value="ECO:0007669"/>
    <property type="project" value="InterPro"/>
</dbReference>
<dbReference type="GO" id="GO:0004347">
    <property type="term" value="F:glucose-6-phosphate isomerase activity"/>
    <property type="evidence" value="ECO:0007669"/>
    <property type="project" value="UniProtKB-UniRule"/>
</dbReference>
<dbReference type="GO" id="GO:0048029">
    <property type="term" value="F:monosaccharide binding"/>
    <property type="evidence" value="ECO:0007669"/>
    <property type="project" value="TreeGrafter"/>
</dbReference>
<dbReference type="GO" id="GO:0006094">
    <property type="term" value="P:gluconeogenesis"/>
    <property type="evidence" value="ECO:0007669"/>
    <property type="project" value="UniProtKB-UniRule"/>
</dbReference>
<dbReference type="GO" id="GO:0051156">
    <property type="term" value="P:glucose 6-phosphate metabolic process"/>
    <property type="evidence" value="ECO:0007669"/>
    <property type="project" value="TreeGrafter"/>
</dbReference>
<dbReference type="GO" id="GO:0006096">
    <property type="term" value="P:glycolytic process"/>
    <property type="evidence" value="ECO:0007669"/>
    <property type="project" value="UniProtKB-UniRule"/>
</dbReference>
<dbReference type="CDD" id="cd05015">
    <property type="entry name" value="SIS_PGI_1"/>
    <property type="match status" value="1"/>
</dbReference>
<dbReference type="CDD" id="cd05016">
    <property type="entry name" value="SIS_PGI_2"/>
    <property type="match status" value="1"/>
</dbReference>
<dbReference type="FunFam" id="3.40.50.10490:FF:000015">
    <property type="entry name" value="Glucose-6-phosphate isomerase"/>
    <property type="match status" value="1"/>
</dbReference>
<dbReference type="FunFam" id="3.40.50.10490:FF:000016">
    <property type="entry name" value="Glucose-6-phosphate isomerase"/>
    <property type="match status" value="1"/>
</dbReference>
<dbReference type="Gene3D" id="3.40.50.10490">
    <property type="entry name" value="Glucose-6-phosphate isomerase like protein, domain 1"/>
    <property type="match status" value="2"/>
</dbReference>
<dbReference type="HAMAP" id="MF_00473">
    <property type="entry name" value="G6P_isomerase"/>
    <property type="match status" value="1"/>
</dbReference>
<dbReference type="InterPro" id="IPR001672">
    <property type="entry name" value="G6P_Isomerase"/>
</dbReference>
<dbReference type="InterPro" id="IPR018189">
    <property type="entry name" value="Phosphoglucose_isomerase_CS"/>
</dbReference>
<dbReference type="InterPro" id="IPR046348">
    <property type="entry name" value="SIS_dom_sf"/>
</dbReference>
<dbReference type="InterPro" id="IPR035476">
    <property type="entry name" value="SIS_PGI_1"/>
</dbReference>
<dbReference type="InterPro" id="IPR035482">
    <property type="entry name" value="SIS_PGI_2"/>
</dbReference>
<dbReference type="NCBIfam" id="NF010697">
    <property type="entry name" value="PRK14097.1"/>
    <property type="match status" value="1"/>
</dbReference>
<dbReference type="PANTHER" id="PTHR11469">
    <property type="entry name" value="GLUCOSE-6-PHOSPHATE ISOMERASE"/>
    <property type="match status" value="1"/>
</dbReference>
<dbReference type="PANTHER" id="PTHR11469:SF1">
    <property type="entry name" value="GLUCOSE-6-PHOSPHATE ISOMERASE"/>
    <property type="match status" value="1"/>
</dbReference>
<dbReference type="Pfam" id="PF00342">
    <property type="entry name" value="PGI"/>
    <property type="match status" value="1"/>
</dbReference>
<dbReference type="PRINTS" id="PR00662">
    <property type="entry name" value="G6PISOMERASE"/>
</dbReference>
<dbReference type="SUPFAM" id="SSF53697">
    <property type="entry name" value="SIS domain"/>
    <property type="match status" value="1"/>
</dbReference>
<dbReference type="PROSITE" id="PS00765">
    <property type="entry name" value="P_GLUCOSE_ISOMERASE_1"/>
    <property type="match status" value="1"/>
</dbReference>
<dbReference type="PROSITE" id="PS00174">
    <property type="entry name" value="P_GLUCOSE_ISOMERASE_2"/>
    <property type="match status" value="1"/>
</dbReference>
<dbReference type="PROSITE" id="PS51463">
    <property type="entry name" value="P_GLUCOSE_ISOMERASE_3"/>
    <property type="match status" value="1"/>
</dbReference>